<evidence type="ECO:0000250" key="1"/>
<evidence type="ECO:0000256" key="2">
    <source>
        <dbReference type="SAM" id="MobiDB-lite"/>
    </source>
</evidence>
<evidence type="ECO:0000305" key="3"/>
<gene>
    <name type="primary">rpsU</name>
    <name type="ordered locus">STY3388</name>
    <name type="ordered locus">t3129</name>
</gene>
<keyword id="KW-0687">Ribonucleoprotein</keyword>
<keyword id="KW-0689">Ribosomal protein</keyword>
<dbReference type="EMBL" id="AL513382">
    <property type="protein sequence ID" value="CAD07734.1"/>
    <property type="molecule type" value="Genomic_DNA"/>
</dbReference>
<dbReference type="EMBL" id="AE014613">
    <property type="protein sequence ID" value="AAO70672.1"/>
    <property type="molecule type" value="Genomic_DNA"/>
</dbReference>
<dbReference type="RefSeq" id="NP_457600.1">
    <property type="nucleotide sequence ID" value="NC_003198.1"/>
</dbReference>
<dbReference type="RefSeq" id="WP_001144069.1">
    <property type="nucleotide sequence ID" value="NZ_WSUR01000003.1"/>
</dbReference>
<dbReference type="SMR" id="P68683"/>
<dbReference type="STRING" id="220341.gene:17587243"/>
<dbReference type="GeneID" id="98390195"/>
<dbReference type="KEGG" id="stt:t3129"/>
<dbReference type="KEGG" id="sty:STY3388"/>
<dbReference type="PATRIC" id="fig|220341.7.peg.3449"/>
<dbReference type="eggNOG" id="COG0828">
    <property type="taxonomic scope" value="Bacteria"/>
</dbReference>
<dbReference type="HOGENOM" id="CLU_159258_1_0_6"/>
<dbReference type="OMA" id="HQHFEKP"/>
<dbReference type="OrthoDB" id="9799244at2"/>
<dbReference type="Proteomes" id="UP000000541">
    <property type="component" value="Chromosome"/>
</dbReference>
<dbReference type="Proteomes" id="UP000002670">
    <property type="component" value="Chromosome"/>
</dbReference>
<dbReference type="GO" id="GO:1990904">
    <property type="term" value="C:ribonucleoprotein complex"/>
    <property type="evidence" value="ECO:0007669"/>
    <property type="project" value="UniProtKB-KW"/>
</dbReference>
<dbReference type="GO" id="GO:0005840">
    <property type="term" value="C:ribosome"/>
    <property type="evidence" value="ECO:0007669"/>
    <property type="project" value="UniProtKB-KW"/>
</dbReference>
<dbReference type="GO" id="GO:0003735">
    <property type="term" value="F:structural constituent of ribosome"/>
    <property type="evidence" value="ECO:0007669"/>
    <property type="project" value="InterPro"/>
</dbReference>
<dbReference type="GO" id="GO:0006412">
    <property type="term" value="P:translation"/>
    <property type="evidence" value="ECO:0007669"/>
    <property type="project" value="UniProtKB-UniRule"/>
</dbReference>
<dbReference type="FunFam" id="1.20.5.1150:FF:000001">
    <property type="entry name" value="30S ribosomal protein S21"/>
    <property type="match status" value="1"/>
</dbReference>
<dbReference type="Gene3D" id="1.20.5.1150">
    <property type="entry name" value="Ribosomal protein S8"/>
    <property type="match status" value="1"/>
</dbReference>
<dbReference type="HAMAP" id="MF_00358">
    <property type="entry name" value="Ribosomal_bS21"/>
    <property type="match status" value="1"/>
</dbReference>
<dbReference type="InterPro" id="IPR001911">
    <property type="entry name" value="Ribosomal_bS21"/>
</dbReference>
<dbReference type="InterPro" id="IPR018278">
    <property type="entry name" value="Ribosomal_bS21_CS"/>
</dbReference>
<dbReference type="InterPro" id="IPR038380">
    <property type="entry name" value="Ribosomal_bS21_sf"/>
</dbReference>
<dbReference type="NCBIfam" id="TIGR00030">
    <property type="entry name" value="S21p"/>
    <property type="match status" value="1"/>
</dbReference>
<dbReference type="PANTHER" id="PTHR21109">
    <property type="entry name" value="MITOCHONDRIAL 28S RIBOSOMAL PROTEIN S21"/>
    <property type="match status" value="1"/>
</dbReference>
<dbReference type="PANTHER" id="PTHR21109:SF22">
    <property type="entry name" value="SMALL RIBOSOMAL SUBUNIT PROTEIN BS21"/>
    <property type="match status" value="1"/>
</dbReference>
<dbReference type="Pfam" id="PF01165">
    <property type="entry name" value="Ribosomal_S21"/>
    <property type="match status" value="1"/>
</dbReference>
<dbReference type="PRINTS" id="PR00976">
    <property type="entry name" value="RIBOSOMALS21"/>
</dbReference>
<dbReference type="PROSITE" id="PS01181">
    <property type="entry name" value="RIBOSOMAL_S21"/>
    <property type="match status" value="1"/>
</dbReference>
<sequence>MPVIKVRENEPFDVALRRFKRSCEKAGVLAEVRRREFYEKPTTERKRAKASAVKRHAKKLARENARRTRLY</sequence>
<reference key="1">
    <citation type="journal article" date="2001" name="Nature">
        <title>Complete genome sequence of a multiple drug resistant Salmonella enterica serovar Typhi CT18.</title>
        <authorList>
            <person name="Parkhill J."/>
            <person name="Dougan G."/>
            <person name="James K.D."/>
            <person name="Thomson N.R."/>
            <person name="Pickard D."/>
            <person name="Wain J."/>
            <person name="Churcher C.M."/>
            <person name="Mungall K.L."/>
            <person name="Bentley S.D."/>
            <person name="Holden M.T.G."/>
            <person name="Sebaihia M."/>
            <person name="Baker S."/>
            <person name="Basham D."/>
            <person name="Brooks K."/>
            <person name="Chillingworth T."/>
            <person name="Connerton P."/>
            <person name="Cronin A."/>
            <person name="Davis P."/>
            <person name="Davies R.M."/>
            <person name="Dowd L."/>
            <person name="White N."/>
            <person name="Farrar J."/>
            <person name="Feltwell T."/>
            <person name="Hamlin N."/>
            <person name="Haque A."/>
            <person name="Hien T.T."/>
            <person name="Holroyd S."/>
            <person name="Jagels K."/>
            <person name="Krogh A."/>
            <person name="Larsen T.S."/>
            <person name="Leather S."/>
            <person name="Moule S."/>
            <person name="O'Gaora P."/>
            <person name="Parry C."/>
            <person name="Quail M.A."/>
            <person name="Rutherford K.M."/>
            <person name="Simmonds M."/>
            <person name="Skelton J."/>
            <person name="Stevens K."/>
            <person name="Whitehead S."/>
            <person name="Barrell B.G."/>
        </authorList>
    </citation>
    <scope>NUCLEOTIDE SEQUENCE [LARGE SCALE GENOMIC DNA]</scope>
    <source>
        <strain>CT18</strain>
    </source>
</reference>
<reference key="2">
    <citation type="journal article" date="2003" name="J. Bacteriol.">
        <title>Comparative genomics of Salmonella enterica serovar Typhi strains Ty2 and CT18.</title>
        <authorList>
            <person name="Deng W."/>
            <person name="Liou S.-R."/>
            <person name="Plunkett G. III"/>
            <person name="Mayhew G.F."/>
            <person name="Rose D.J."/>
            <person name="Burland V."/>
            <person name="Kodoyianni V."/>
            <person name="Schwartz D.C."/>
            <person name="Blattner F.R."/>
        </authorList>
    </citation>
    <scope>NUCLEOTIDE SEQUENCE [LARGE SCALE GENOMIC DNA]</scope>
    <source>
        <strain>ATCC 700931 / Ty2</strain>
    </source>
</reference>
<proteinExistence type="inferred from homology"/>
<comment type="similarity">
    <text evidence="3">Belongs to the bacterial ribosomal protein bS21 family.</text>
</comment>
<protein>
    <recommendedName>
        <fullName evidence="3">Small ribosomal subunit protein bS21</fullName>
    </recommendedName>
    <alternativeName>
        <fullName>30S ribosomal protein S21</fullName>
    </alternativeName>
</protein>
<accession>P68683</accession>
<accession>P02379</accession>
<accession>Q8ZI69</accession>
<feature type="initiator methionine" description="Removed" evidence="1">
    <location>
        <position position="1"/>
    </location>
</feature>
<feature type="chain" id="PRO_0000178370" description="Small ribosomal subunit protein bS21">
    <location>
        <begin position="2"/>
        <end position="71"/>
    </location>
</feature>
<feature type="region of interest" description="Disordered" evidence="2">
    <location>
        <begin position="43"/>
        <end position="71"/>
    </location>
</feature>
<feature type="compositionally biased region" description="Basic residues" evidence="2">
    <location>
        <begin position="46"/>
        <end position="59"/>
    </location>
</feature>
<feature type="compositionally biased region" description="Basic and acidic residues" evidence="2">
    <location>
        <begin position="60"/>
        <end position="71"/>
    </location>
</feature>
<name>RS21_SALTI</name>
<organism>
    <name type="scientific">Salmonella typhi</name>
    <dbReference type="NCBI Taxonomy" id="90370"/>
    <lineage>
        <taxon>Bacteria</taxon>
        <taxon>Pseudomonadati</taxon>
        <taxon>Pseudomonadota</taxon>
        <taxon>Gammaproteobacteria</taxon>
        <taxon>Enterobacterales</taxon>
        <taxon>Enterobacteriaceae</taxon>
        <taxon>Salmonella</taxon>
    </lineage>
</organism>